<organism>
    <name type="scientific">Danio rerio</name>
    <name type="common">Zebrafish</name>
    <name type="synonym">Brachydanio rerio</name>
    <dbReference type="NCBI Taxonomy" id="7955"/>
    <lineage>
        <taxon>Eukaryota</taxon>
        <taxon>Metazoa</taxon>
        <taxon>Chordata</taxon>
        <taxon>Craniata</taxon>
        <taxon>Vertebrata</taxon>
        <taxon>Euteleostomi</taxon>
        <taxon>Actinopterygii</taxon>
        <taxon>Neopterygii</taxon>
        <taxon>Teleostei</taxon>
        <taxon>Ostariophysi</taxon>
        <taxon>Cypriniformes</taxon>
        <taxon>Danionidae</taxon>
        <taxon>Danioninae</taxon>
        <taxon>Danio</taxon>
    </lineage>
</organism>
<protein>
    <recommendedName>
        <fullName>Alpha-1,3-mannosyl-glycoprotein 4-beta-N-acetylglucosaminyltransferase C</fullName>
        <ecNumber>2.4.1.145</ecNumber>
    </recommendedName>
    <alternativeName>
        <fullName>N-glycosyl-oligosaccharide-glycoprotein N-acetylglucosaminyltransferase IVc</fullName>
        <shortName>GnT-IVc</shortName>
        <shortName>N-acetylglucosaminyltransferase IVc</shortName>
    </alternativeName>
    <alternativeName>
        <fullName>UDP-N-acetylglucosamine: alpha-1,3-D-mannoside beta-1,4-N-acetylglucosaminyltransferase IVc</fullName>
    </alternativeName>
</protein>
<evidence type="ECO:0000250" key="1"/>
<evidence type="ECO:0000255" key="2"/>
<evidence type="ECO:0000305" key="3"/>
<feature type="chain" id="PRO_0000288601" description="Alpha-1,3-mannosyl-glycoprotein 4-beta-N-acetylglucosaminyltransferase C">
    <location>
        <begin position="1"/>
        <end position="454"/>
    </location>
</feature>
<feature type="topological domain" description="Cytoplasmic" evidence="2">
    <location>
        <begin position="1"/>
        <end position="6"/>
    </location>
</feature>
<feature type="transmembrane region" description="Helical; Signal-anchor for type II membrane protein" evidence="2">
    <location>
        <begin position="7"/>
        <end position="24"/>
    </location>
</feature>
<feature type="topological domain" description="Lumenal" evidence="2">
    <location>
        <begin position="25"/>
        <end position="454"/>
    </location>
</feature>
<feature type="glycosylation site" description="N-linked (GlcNAc...) asparagine" evidence="2">
    <location>
        <position position="58"/>
    </location>
</feature>
<feature type="glycosylation site" description="N-linked (GlcNAc...) asparagine" evidence="2">
    <location>
        <position position="189"/>
    </location>
</feature>
<gene>
    <name type="primary">mgat4c</name>
    <name type="ORF">zgc:101663</name>
</gene>
<dbReference type="EC" id="2.4.1.145"/>
<dbReference type="EMBL" id="BC085406">
    <property type="protein sequence ID" value="AAH85406.1"/>
    <property type="molecule type" value="mRNA"/>
</dbReference>
<dbReference type="RefSeq" id="NP_001007438.1">
    <property type="nucleotide sequence ID" value="NM_001007437.1"/>
</dbReference>
<dbReference type="RefSeq" id="XP_005161953.1">
    <property type="nucleotide sequence ID" value="XM_005161896.3"/>
</dbReference>
<dbReference type="SMR" id="Q5U3T0"/>
<dbReference type="FunCoup" id="Q5U3T0">
    <property type="interactions" value="1354"/>
</dbReference>
<dbReference type="STRING" id="7955.ENSDARP00000055147"/>
<dbReference type="CAZy" id="GT54">
    <property type="family name" value="Glycosyltransferase Family 54"/>
</dbReference>
<dbReference type="GlyCosmos" id="Q5U3T0">
    <property type="glycosylation" value="2 sites, No reported glycans"/>
</dbReference>
<dbReference type="PaxDb" id="7955-ENSDARP00000101204"/>
<dbReference type="Ensembl" id="ENSDART00000055148">
    <property type="protein sequence ID" value="ENSDARP00000055147"/>
    <property type="gene ID" value="ENSDARG00000037852"/>
</dbReference>
<dbReference type="Ensembl" id="ENSDART00000114000">
    <property type="protein sequence ID" value="ENSDARP00000101204"/>
    <property type="gene ID" value="ENSDARG00000037852"/>
</dbReference>
<dbReference type="GeneID" id="492796"/>
<dbReference type="KEGG" id="dre:492796"/>
<dbReference type="AGR" id="ZFIN:ZDB-GENE-041114-149"/>
<dbReference type="ZFIN" id="ZDB-GENE-041114-149">
    <property type="gene designation" value="zgc:101663"/>
</dbReference>
<dbReference type="eggNOG" id="ENOG502SJ9J">
    <property type="taxonomic scope" value="Eukaryota"/>
</dbReference>
<dbReference type="HOGENOM" id="CLU_027046_1_0_1"/>
<dbReference type="InParanoid" id="Q5U3T0"/>
<dbReference type="OMA" id="NEAITCK"/>
<dbReference type="OrthoDB" id="2016523at2759"/>
<dbReference type="PhylomeDB" id="Q5U3T0"/>
<dbReference type="TreeFam" id="TF324570"/>
<dbReference type="UniPathway" id="UPA00378"/>
<dbReference type="PRO" id="PR:Q5U3T0"/>
<dbReference type="Proteomes" id="UP000000437">
    <property type="component" value="Chromosome 23"/>
</dbReference>
<dbReference type="Bgee" id="ENSDARG00000037852">
    <property type="expression patterns" value="Expressed in head kidney and 23 other cell types or tissues"/>
</dbReference>
<dbReference type="GO" id="GO:0000139">
    <property type="term" value="C:Golgi membrane"/>
    <property type="evidence" value="ECO:0007669"/>
    <property type="project" value="UniProtKB-SubCell"/>
</dbReference>
<dbReference type="GO" id="GO:0008375">
    <property type="term" value="F:acetylglucosaminyltransferase activity"/>
    <property type="evidence" value="ECO:0000318"/>
    <property type="project" value="GO_Central"/>
</dbReference>
<dbReference type="GO" id="GO:0008454">
    <property type="term" value="F:alpha-1,3-mannosylglycoprotein 4-beta-N-acetylglucosaminyltransferase activity"/>
    <property type="evidence" value="ECO:0007669"/>
    <property type="project" value="UniProtKB-EC"/>
</dbReference>
<dbReference type="GO" id="GO:0046872">
    <property type="term" value="F:metal ion binding"/>
    <property type="evidence" value="ECO:0007669"/>
    <property type="project" value="UniProtKB-KW"/>
</dbReference>
<dbReference type="GO" id="GO:0006487">
    <property type="term" value="P:protein N-linked glycosylation"/>
    <property type="evidence" value="ECO:0000318"/>
    <property type="project" value="GO_Central"/>
</dbReference>
<dbReference type="InterPro" id="IPR006759">
    <property type="entry name" value="Glyco_transf_54"/>
</dbReference>
<dbReference type="InterPro" id="IPR056576">
    <property type="entry name" value="MGAT4_A/B/C_C"/>
</dbReference>
<dbReference type="PANTHER" id="PTHR12062:SF11">
    <property type="entry name" value="ALPHA-1,3-MANNOSYL-GLYCOPROTEIN 4-BETA-N-ACETYLGLUCOSAMINYLTRANSFERASE-LIKE PROTEIN MGAT4E"/>
    <property type="match status" value="1"/>
</dbReference>
<dbReference type="PANTHER" id="PTHR12062">
    <property type="entry name" value="N-ACETYLGLUCOSAMINYLTRANSFERASE VI"/>
    <property type="match status" value="1"/>
</dbReference>
<dbReference type="Pfam" id="PF04666">
    <property type="entry name" value="MGAT4_cons"/>
    <property type="match status" value="1"/>
</dbReference>
<dbReference type="Pfam" id="PF23524">
    <property type="entry name" value="MGAT4A_C"/>
    <property type="match status" value="1"/>
</dbReference>
<proteinExistence type="evidence at transcript level"/>
<reference key="1">
    <citation type="submission" date="2004-11" db="EMBL/GenBank/DDBJ databases">
        <authorList>
            <consortium name="NIH - Zebrafish Gene Collection (ZGC) project"/>
        </authorList>
    </citation>
    <scope>NUCLEOTIDE SEQUENCE [LARGE SCALE MRNA]</scope>
    <source>
        <tissue>Embryo</tissue>
    </source>
</reference>
<comment type="function">
    <text evidence="1">Glycosyltransferase that participates in the transfer of N-acetylglucosamine (GlcNAc) to the core mannose residues of N-linked glycans. Catalyzes the formation of the GlcNAcbeta1-4 branch on the GlcNAcbeta1-2Manalpha1-3 arm of the core structure of N-linked glycans (By similarity).</text>
</comment>
<comment type="catalytic activity">
    <reaction>
        <text>N(4)-{beta-D-GlcNAc-(1-&gt;2)-alpha-D-Man-(1-&gt;3)-[beta-D-GlcNAc-(1-&gt;2)-alpha-D-Man-(1-&gt;6)]-beta-D-Man-(1-&gt;4)-beta-D-GlcNAc-(1-&gt;4)-beta-D-GlcNAc}-L-asparaginyl-[protein] + UDP-N-acetyl-alpha-D-glucosamine = N(4)-{beta-D-GlcNAc-(1-&gt;2)-[beta-D-GlcNAc-(1-&gt;4)]-alpha-D-Man-(1-&gt;3)-[beta-D-GlcNAc-(1-&gt;2)-alpha-D-Man-(1-&gt;6)]-beta-D-Man-(1-&gt;4)-beta-D-GlcNAc-(1-&gt;4)-beta-D-GlcNAc}-L-asparaginyl-[protein] + UDP + H(+)</text>
        <dbReference type="Rhea" id="RHEA:16057"/>
        <dbReference type="Rhea" id="RHEA-COMP:13526"/>
        <dbReference type="Rhea" id="RHEA-COMP:14374"/>
        <dbReference type="ChEBI" id="CHEBI:15378"/>
        <dbReference type="ChEBI" id="CHEBI:57705"/>
        <dbReference type="ChEBI" id="CHEBI:58223"/>
        <dbReference type="ChEBI" id="CHEBI:60651"/>
        <dbReference type="ChEBI" id="CHEBI:139507"/>
        <dbReference type="EC" id="2.4.1.145"/>
    </reaction>
</comment>
<comment type="cofactor">
    <cofactor evidence="1">
        <name>a divalent metal cation</name>
        <dbReference type="ChEBI" id="CHEBI:60240"/>
    </cofactor>
</comment>
<comment type="pathway">
    <text>Protein modification; protein glycosylation.</text>
</comment>
<comment type="subcellular location">
    <subcellularLocation>
        <location evidence="1">Golgi apparatus membrane</location>
        <topology evidence="1">Single-pass type II membrane protein</topology>
    </subcellularLocation>
</comment>
<comment type="similarity">
    <text evidence="3">Belongs to the glycosyltransferase 54 family.</text>
</comment>
<accession>Q5U3T0</accession>
<keyword id="KW-0325">Glycoprotein</keyword>
<keyword id="KW-0328">Glycosyltransferase</keyword>
<keyword id="KW-0333">Golgi apparatus</keyword>
<keyword id="KW-0472">Membrane</keyword>
<keyword id="KW-0479">Metal-binding</keyword>
<keyword id="KW-1185">Reference proteome</keyword>
<keyword id="KW-0735">Signal-anchor</keyword>
<keyword id="KW-0808">Transferase</keyword>
<keyword id="KW-0812">Transmembrane</keyword>
<keyword id="KW-1133">Transmembrane helix</keyword>
<name>MGT4C_DANRE</name>
<sequence>MRCHLKKWVVVAAGLSILTSLYVYMQRAQSGNLKGSVIWTWDRESWMEGIKSHYLHFNISINVLGGVLQPSKKYLTVGLSSVRREKGFYLHDTLQSIFSESSEEELDQMVVVVLLADFDLPWIQQTADKISREFAVQLSKGRLLVIHANKEHYPPLTGLKRNFNDAPDRVSFRSKQNVDYSFLLHFSSNLSQYYIMLEDDVGCSRNFLSSIQQHIRSMTDSKWVTLEFSKLGYIGKLYQSKDLPTLARFLYNFYQEMPCDFLLSHFRRLLMQDKVIRFRPSLFQHMGTYSSFRGTYNRLKDEDFVQELADNPPADVRTNIQVFQTYVPEKAYSQDVEYFWGVSPIGTESFFLVVFREAVRISRVQIHTGSDGKDELASADVELGRVLVTGEPAVDCSGFKTLGSLQHGQFNEEGVQKLLPDAVVCLRIRVTAAQPEWVIISRIQVWTVKEDKTI</sequence>